<organism>
    <name type="scientific">Lithobates palustris</name>
    <name type="common">Pickerel frog</name>
    <name type="synonym">Rana palustris</name>
    <dbReference type="NCBI Taxonomy" id="298395"/>
    <lineage>
        <taxon>Eukaryota</taxon>
        <taxon>Metazoa</taxon>
        <taxon>Chordata</taxon>
        <taxon>Craniata</taxon>
        <taxon>Vertebrata</taxon>
        <taxon>Euteleostomi</taxon>
        <taxon>Amphibia</taxon>
        <taxon>Batrachia</taxon>
        <taxon>Anura</taxon>
        <taxon>Neobatrachia</taxon>
        <taxon>Ranoidea</taxon>
        <taxon>Ranidae</taxon>
        <taxon>Lithobates</taxon>
    </lineage>
</organism>
<reference evidence="7" key="1">
    <citation type="journal article" date="2007" name="Peptides">
        <title>Rapid identification of precursor cDNAs encoding five structural classes of antimicrobial peptides from pickerel frog (Rana palustris) skin secretion by single step 'shotgun' cloning.</title>
        <authorList>
            <person name="Zhou M."/>
            <person name="Wang L."/>
            <person name="Owens D.E."/>
            <person name="Chen T."/>
            <person name="Walker B."/>
            <person name="Shaw C."/>
        </authorList>
    </citation>
    <scope>NUCLEOTIDE SEQUENCE [MRNA]</scope>
    <source>
        <tissue evidence="3">Skin secretion</tissue>
    </source>
</reference>
<reference evidence="6" key="2">
    <citation type="journal article" date="2000" name="Biochim. Biophys. Acta">
        <title>Multiple antimicrobial peptides and peptides related to bradykinin and neuromedin N isolated from skin secretions of the pickerel frog, Rana palustris.</title>
        <authorList>
            <person name="Basir Y.J."/>
            <person name="Knoop F.C."/>
            <person name="Dulka J."/>
            <person name="Conlon J.M."/>
        </authorList>
    </citation>
    <scope>PROTEIN SEQUENCE OF 47-70</scope>
    <scope>FUNCTION</scope>
    <scope>SUBCELLULAR LOCATION</scope>
    <scope>TISSUE SPECIFICITY</scope>
    <scope>MASS SPECTROMETRY</scope>
    <scope>DISULFIDE BOND</scope>
    <source>
        <tissue evidence="2">Skin secretion</tissue>
    </source>
</reference>
<proteinExistence type="evidence at protein level"/>
<sequence>MFTTKKSMLLLFFLGTINLSLCEEERNAEEERRDEPDEMNVEVEKRFLPLIAGLAANFLPKIFCAITKKC</sequence>
<name>BR1B_LITPA</name>
<keyword id="KW-0878">Amphibian defense peptide</keyword>
<keyword id="KW-0044">Antibiotic</keyword>
<keyword id="KW-0929">Antimicrobial</keyword>
<keyword id="KW-0165">Cleavage on pair of basic residues</keyword>
<keyword id="KW-0903">Direct protein sequencing</keyword>
<keyword id="KW-1015">Disulfide bond</keyword>
<keyword id="KW-0295">Fungicide</keyword>
<keyword id="KW-0964">Secreted</keyword>
<keyword id="KW-0732">Signal</keyword>
<dbReference type="EMBL" id="AM745087">
    <property type="protein sequence ID" value="CAN87009.1"/>
    <property type="molecule type" value="mRNA"/>
</dbReference>
<dbReference type="GO" id="GO:0005576">
    <property type="term" value="C:extracellular region"/>
    <property type="evidence" value="ECO:0007669"/>
    <property type="project" value="UniProtKB-SubCell"/>
</dbReference>
<dbReference type="GO" id="GO:0042742">
    <property type="term" value="P:defense response to bacterium"/>
    <property type="evidence" value="ECO:0007669"/>
    <property type="project" value="UniProtKB-KW"/>
</dbReference>
<dbReference type="GO" id="GO:0050832">
    <property type="term" value="P:defense response to fungus"/>
    <property type="evidence" value="ECO:0007669"/>
    <property type="project" value="UniProtKB-KW"/>
</dbReference>
<dbReference type="GO" id="GO:0031640">
    <property type="term" value="P:killing of cells of another organism"/>
    <property type="evidence" value="ECO:0007669"/>
    <property type="project" value="UniProtKB-KW"/>
</dbReference>
<dbReference type="InterPro" id="IPR012520">
    <property type="entry name" value="Antimicrobial_frog_1"/>
</dbReference>
<dbReference type="InterPro" id="IPR004275">
    <property type="entry name" value="Frog_antimicrobial_propeptide"/>
</dbReference>
<dbReference type="Pfam" id="PF08018">
    <property type="entry name" value="Antimicrobial_1"/>
    <property type="match status" value="1"/>
</dbReference>
<dbReference type="Pfam" id="PF03032">
    <property type="entry name" value="FSAP_sig_propep"/>
    <property type="match status" value="1"/>
</dbReference>
<evidence type="ECO:0000255" key="1"/>
<evidence type="ECO:0000269" key="2">
    <source>
    </source>
</evidence>
<evidence type="ECO:0000269" key="3">
    <source>
    </source>
</evidence>
<evidence type="ECO:0000303" key="4">
    <source>
    </source>
</evidence>
<evidence type="ECO:0000303" key="5">
    <source>
    </source>
</evidence>
<evidence type="ECO:0000305" key="6"/>
<evidence type="ECO:0000312" key="7">
    <source>
        <dbReference type="EMBL" id="CAN87009.1"/>
    </source>
</evidence>
<accession>A7WNV3</accession>
<feature type="signal peptide" evidence="1">
    <location>
        <begin position="1"/>
        <end position="22"/>
    </location>
</feature>
<feature type="propeptide" id="PRO_5000271594" evidence="1">
    <location>
        <begin position="23"/>
        <end position="44"/>
    </location>
</feature>
<feature type="peptide" id="PRO_5000271595" description="Brevinin-1PLb" evidence="2">
    <location>
        <begin position="47"/>
        <end position="70"/>
    </location>
</feature>
<feature type="disulfide bond" evidence="2">
    <location>
        <begin position="64"/>
        <end position="70"/>
    </location>
</feature>
<comment type="function">
    <text evidence="2">Antimicrobial activity against the Gram-negative bacterium E.coli, the Gram-positive bacterium S.aureus and the yeast C.albicans.</text>
</comment>
<comment type="subcellular location">
    <subcellularLocation>
        <location evidence="2">Secreted</location>
    </subcellularLocation>
</comment>
<comment type="tissue specificity">
    <text evidence="2">Expressed by the skin glands.</text>
</comment>
<comment type="mass spectrometry"/>
<comment type="similarity">
    <text evidence="1">Belongs to the frog skin active peptide (FSAP) family. Brevinin subfamily.</text>
</comment>
<protein>
    <recommendedName>
        <fullName evidence="4 5">Brevinin-1PLb</fullName>
    </recommendedName>
</protein>